<sequence>MTKGILGKKVGMTQIFTEAGEFIPVTVIEATPNVVLQVKTVETDGYEAVQVGFDDKREVLSNKPAKGHVAKANTAPKRFIREFKNIEGLEVGSEITVDIFEAGDIVDVTGTSKGKGFQGVIKRHGQSRGPMAHGSRYHRRPGSMGPVAPNRVFKNKHLAGRMGGNRVTIQNLEIVQVIPEKNVILIKGNVPGAKKSLITIKSAVKTAK</sequence>
<name>RL3_STRTD</name>
<gene>
    <name evidence="1" type="primary">rplC</name>
    <name type="ordered locus">STER_1907</name>
</gene>
<feature type="chain" id="PRO_1000052157" description="Large ribosomal subunit protein uL3">
    <location>
        <begin position="1"/>
        <end position="208"/>
    </location>
</feature>
<feature type="region of interest" description="Disordered" evidence="2">
    <location>
        <begin position="124"/>
        <end position="146"/>
    </location>
</feature>
<dbReference type="EMBL" id="CP000419">
    <property type="protein sequence ID" value="ABJ67021.1"/>
    <property type="molecule type" value="Genomic_DNA"/>
</dbReference>
<dbReference type="RefSeq" id="WP_011681717.1">
    <property type="nucleotide sequence ID" value="NC_008532.1"/>
</dbReference>
<dbReference type="SMR" id="Q03IF1"/>
<dbReference type="KEGG" id="ste:STER_1907"/>
<dbReference type="HOGENOM" id="CLU_044142_4_1_9"/>
<dbReference type="GO" id="GO:0022625">
    <property type="term" value="C:cytosolic large ribosomal subunit"/>
    <property type="evidence" value="ECO:0007669"/>
    <property type="project" value="TreeGrafter"/>
</dbReference>
<dbReference type="GO" id="GO:0019843">
    <property type="term" value="F:rRNA binding"/>
    <property type="evidence" value="ECO:0007669"/>
    <property type="project" value="UniProtKB-UniRule"/>
</dbReference>
<dbReference type="GO" id="GO:0003735">
    <property type="term" value="F:structural constituent of ribosome"/>
    <property type="evidence" value="ECO:0007669"/>
    <property type="project" value="InterPro"/>
</dbReference>
<dbReference type="GO" id="GO:0006412">
    <property type="term" value="P:translation"/>
    <property type="evidence" value="ECO:0007669"/>
    <property type="project" value="UniProtKB-UniRule"/>
</dbReference>
<dbReference type="FunFam" id="2.40.30.10:FF:000004">
    <property type="entry name" value="50S ribosomal protein L3"/>
    <property type="match status" value="1"/>
</dbReference>
<dbReference type="FunFam" id="3.30.160.810:FF:000002">
    <property type="entry name" value="50S ribosomal protein L3"/>
    <property type="match status" value="1"/>
</dbReference>
<dbReference type="Gene3D" id="3.30.160.810">
    <property type="match status" value="1"/>
</dbReference>
<dbReference type="Gene3D" id="2.40.30.10">
    <property type="entry name" value="Translation factors"/>
    <property type="match status" value="1"/>
</dbReference>
<dbReference type="HAMAP" id="MF_01325_B">
    <property type="entry name" value="Ribosomal_uL3_B"/>
    <property type="match status" value="1"/>
</dbReference>
<dbReference type="InterPro" id="IPR000597">
    <property type="entry name" value="Ribosomal_uL3"/>
</dbReference>
<dbReference type="InterPro" id="IPR019927">
    <property type="entry name" value="Ribosomal_uL3_bac/org-type"/>
</dbReference>
<dbReference type="InterPro" id="IPR019926">
    <property type="entry name" value="Ribosomal_uL3_CS"/>
</dbReference>
<dbReference type="InterPro" id="IPR009000">
    <property type="entry name" value="Transl_B-barrel_sf"/>
</dbReference>
<dbReference type="NCBIfam" id="TIGR03625">
    <property type="entry name" value="L3_bact"/>
    <property type="match status" value="1"/>
</dbReference>
<dbReference type="PANTHER" id="PTHR11229">
    <property type="entry name" value="50S RIBOSOMAL PROTEIN L3"/>
    <property type="match status" value="1"/>
</dbReference>
<dbReference type="PANTHER" id="PTHR11229:SF16">
    <property type="entry name" value="LARGE RIBOSOMAL SUBUNIT PROTEIN UL3C"/>
    <property type="match status" value="1"/>
</dbReference>
<dbReference type="Pfam" id="PF00297">
    <property type="entry name" value="Ribosomal_L3"/>
    <property type="match status" value="1"/>
</dbReference>
<dbReference type="SUPFAM" id="SSF50447">
    <property type="entry name" value="Translation proteins"/>
    <property type="match status" value="1"/>
</dbReference>
<dbReference type="PROSITE" id="PS00474">
    <property type="entry name" value="RIBOSOMAL_L3"/>
    <property type="match status" value="1"/>
</dbReference>
<organism>
    <name type="scientific">Streptococcus thermophilus (strain ATCC BAA-491 / LMD-9)</name>
    <dbReference type="NCBI Taxonomy" id="322159"/>
    <lineage>
        <taxon>Bacteria</taxon>
        <taxon>Bacillati</taxon>
        <taxon>Bacillota</taxon>
        <taxon>Bacilli</taxon>
        <taxon>Lactobacillales</taxon>
        <taxon>Streptococcaceae</taxon>
        <taxon>Streptococcus</taxon>
    </lineage>
</organism>
<protein>
    <recommendedName>
        <fullName evidence="1">Large ribosomal subunit protein uL3</fullName>
    </recommendedName>
    <alternativeName>
        <fullName evidence="3">50S ribosomal protein L3</fullName>
    </alternativeName>
</protein>
<comment type="function">
    <text evidence="1">One of the primary rRNA binding proteins, it binds directly near the 3'-end of the 23S rRNA, where it nucleates assembly of the 50S subunit.</text>
</comment>
<comment type="subunit">
    <text evidence="1">Part of the 50S ribosomal subunit. Forms a cluster with proteins L14 and L19.</text>
</comment>
<comment type="similarity">
    <text evidence="1">Belongs to the universal ribosomal protein uL3 family.</text>
</comment>
<accession>Q03IF1</accession>
<reference key="1">
    <citation type="journal article" date="2006" name="Proc. Natl. Acad. Sci. U.S.A.">
        <title>Comparative genomics of the lactic acid bacteria.</title>
        <authorList>
            <person name="Makarova K.S."/>
            <person name="Slesarev A."/>
            <person name="Wolf Y.I."/>
            <person name="Sorokin A."/>
            <person name="Mirkin B."/>
            <person name="Koonin E.V."/>
            <person name="Pavlov A."/>
            <person name="Pavlova N."/>
            <person name="Karamychev V."/>
            <person name="Polouchine N."/>
            <person name="Shakhova V."/>
            <person name="Grigoriev I."/>
            <person name="Lou Y."/>
            <person name="Rohksar D."/>
            <person name="Lucas S."/>
            <person name="Huang K."/>
            <person name="Goodstein D.M."/>
            <person name="Hawkins T."/>
            <person name="Plengvidhya V."/>
            <person name="Welker D."/>
            <person name="Hughes J."/>
            <person name="Goh Y."/>
            <person name="Benson A."/>
            <person name="Baldwin K."/>
            <person name="Lee J.-H."/>
            <person name="Diaz-Muniz I."/>
            <person name="Dosti B."/>
            <person name="Smeianov V."/>
            <person name="Wechter W."/>
            <person name="Barabote R."/>
            <person name="Lorca G."/>
            <person name="Altermann E."/>
            <person name="Barrangou R."/>
            <person name="Ganesan B."/>
            <person name="Xie Y."/>
            <person name="Rawsthorne H."/>
            <person name="Tamir D."/>
            <person name="Parker C."/>
            <person name="Breidt F."/>
            <person name="Broadbent J.R."/>
            <person name="Hutkins R."/>
            <person name="O'Sullivan D."/>
            <person name="Steele J."/>
            <person name="Unlu G."/>
            <person name="Saier M.H. Jr."/>
            <person name="Klaenhammer T."/>
            <person name="Richardson P."/>
            <person name="Kozyavkin S."/>
            <person name="Weimer B.C."/>
            <person name="Mills D.A."/>
        </authorList>
    </citation>
    <scope>NUCLEOTIDE SEQUENCE [LARGE SCALE GENOMIC DNA]</scope>
    <source>
        <strain>ATCC BAA-491 / LMD-9</strain>
    </source>
</reference>
<evidence type="ECO:0000255" key="1">
    <source>
        <dbReference type="HAMAP-Rule" id="MF_01325"/>
    </source>
</evidence>
<evidence type="ECO:0000256" key="2">
    <source>
        <dbReference type="SAM" id="MobiDB-lite"/>
    </source>
</evidence>
<evidence type="ECO:0000305" key="3"/>
<proteinExistence type="inferred from homology"/>
<keyword id="KW-0687">Ribonucleoprotein</keyword>
<keyword id="KW-0689">Ribosomal protein</keyword>
<keyword id="KW-0694">RNA-binding</keyword>
<keyword id="KW-0699">rRNA-binding</keyword>